<sequence length="95" mass="11182">MNNLTLEKKAQTRNLRKTLQGIVIRTSPKTIMVEVETAYKHKLYAKRFKKRKKFNTHDEKNLAEVGDFVKIAECRPISKTKHFRLVEVLQKKGEI</sequence>
<name>RS17_MESH7</name>
<keyword id="KW-0687">Ribonucleoprotein</keyword>
<keyword id="KW-0689">Ribosomal protein</keyword>
<keyword id="KW-0694">RNA-binding</keyword>
<keyword id="KW-0699">rRNA-binding</keyword>
<feature type="chain" id="PRO_0000233509" description="Small ribosomal subunit protein uS17">
    <location>
        <begin position="1"/>
        <end position="95"/>
    </location>
</feature>
<gene>
    <name evidence="1" type="primary">rpsQ</name>
    <name type="ordered locus">MHP7448_0185</name>
</gene>
<reference key="1">
    <citation type="journal article" date="2005" name="J. Bacteriol.">
        <title>Swine and poultry pathogens: the complete genome sequences of two strains of Mycoplasma hyopneumoniae and a strain of Mycoplasma synoviae.</title>
        <authorList>
            <person name="Vasconcelos A.T.R."/>
            <person name="Ferreira H.B."/>
            <person name="Bizarro C.V."/>
            <person name="Bonatto S.L."/>
            <person name="Carvalho M.O."/>
            <person name="Pinto P.M."/>
            <person name="Almeida D.F."/>
            <person name="Almeida L.G.P."/>
            <person name="Almeida R."/>
            <person name="Alves-Junior L."/>
            <person name="Assuncao E.N."/>
            <person name="Azevedo V.A.C."/>
            <person name="Bogo M.R."/>
            <person name="Brigido M.M."/>
            <person name="Brocchi M."/>
            <person name="Burity H.A."/>
            <person name="Camargo A.A."/>
            <person name="Camargo S.S."/>
            <person name="Carepo M.S."/>
            <person name="Carraro D.M."/>
            <person name="de Mattos Cascardo J.C."/>
            <person name="Castro L.A."/>
            <person name="Cavalcanti G."/>
            <person name="Chemale G."/>
            <person name="Collevatti R.G."/>
            <person name="Cunha C.W."/>
            <person name="Dallagiovanna B."/>
            <person name="Dambros B.P."/>
            <person name="Dellagostin O.A."/>
            <person name="Falcao C."/>
            <person name="Fantinatti-Garboggini F."/>
            <person name="Felipe M.S.S."/>
            <person name="Fiorentin L."/>
            <person name="Franco G.R."/>
            <person name="Freitas N.S.A."/>
            <person name="Frias D."/>
            <person name="Grangeiro T.B."/>
            <person name="Grisard E.C."/>
            <person name="Guimaraes C.T."/>
            <person name="Hungria M."/>
            <person name="Jardim S.N."/>
            <person name="Krieger M.A."/>
            <person name="Laurino J.P."/>
            <person name="Lima L.F.A."/>
            <person name="Lopes M.I."/>
            <person name="Loreto E.L.S."/>
            <person name="Madeira H.M.F."/>
            <person name="Manfio G.P."/>
            <person name="Maranhao A.Q."/>
            <person name="Martinkovics C.T."/>
            <person name="Medeiros S.R.B."/>
            <person name="Moreira M.A.M."/>
            <person name="Neiva M."/>
            <person name="Ramalho-Neto C.E."/>
            <person name="Nicolas M.F."/>
            <person name="Oliveira S.C."/>
            <person name="Paixao R.F.C."/>
            <person name="Pedrosa F.O."/>
            <person name="Pena S.D.J."/>
            <person name="Pereira M."/>
            <person name="Pereira-Ferrari L."/>
            <person name="Piffer I."/>
            <person name="Pinto L.S."/>
            <person name="Potrich D.P."/>
            <person name="Salim A.C.M."/>
            <person name="Santos F.R."/>
            <person name="Schmitt R."/>
            <person name="Schneider M.P.C."/>
            <person name="Schrank A."/>
            <person name="Schrank I.S."/>
            <person name="Schuck A.F."/>
            <person name="Seuanez H.N."/>
            <person name="Silva D.W."/>
            <person name="Silva R."/>
            <person name="Silva S.C."/>
            <person name="Soares C.M.A."/>
            <person name="Souza K.R.L."/>
            <person name="Souza R.C."/>
            <person name="Staats C.C."/>
            <person name="Steffens M.B.R."/>
            <person name="Teixeira S.M.R."/>
            <person name="Urmenyi T.P."/>
            <person name="Vainstein M.H."/>
            <person name="Zuccherato L.W."/>
            <person name="Simpson A.J.G."/>
            <person name="Zaha A."/>
        </authorList>
    </citation>
    <scope>NUCLEOTIDE SEQUENCE [LARGE SCALE GENOMIC DNA]</scope>
    <source>
        <strain>7448</strain>
    </source>
</reference>
<proteinExistence type="inferred from homology"/>
<dbReference type="EMBL" id="AE017244">
    <property type="protein sequence ID" value="AAZ53559.2"/>
    <property type="molecule type" value="Genomic_DNA"/>
</dbReference>
<dbReference type="RefSeq" id="WP_014579611.1">
    <property type="nucleotide sequence ID" value="NC_007332.1"/>
</dbReference>
<dbReference type="SMR" id="Q4A8I0"/>
<dbReference type="GeneID" id="41334484"/>
<dbReference type="KEGG" id="mhp:MHP7448_0185"/>
<dbReference type="HOGENOM" id="CLU_073626_1_0_14"/>
<dbReference type="Proteomes" id="UP000000553">
    <property type="component" value="Chromosome"/>
</dbReference>
<dbReference type="GO" id="GO:0022627">
    <property type="term" value="C:cytosolic small ribosomal subunit"/>
    <property type="evidence" value="ECO:0007669"/>
    <property type="project" value="TreeGrafter"/>
</dbReference>
<dbReference type="GO" id="GO:0019843">
    <property type="term" value="F:rRNA binding"/>
    <property type="evidence" value="ECO:0007669"/>
    <property type="project" value="UniProtKB-UniRule"/>
</dbReference>
<dbReference type="GO" id="GO:0003735">
    <property type="term" value="F:structural constituent of ribosome"/>
    <property type="evidence" value="ECO:0007669"/>
    <property type="project" value="InterPro"/>
</dbReference>
<dbReference type="GO" id="GO:0006412">
    <property type="term" value="P:translation"/>
    <property type="evidence" value="ECO:0007669"/>
    <property type="project" value="UniProtKB-UniRule"/>
</dbReference>
<dbReference type="CDD" id="cd00364">
    <property type="entry name" value="Ribosomal_uS17"/>
    <property type="match status" value="1"/>
</dbReference>
<dbReference type="Gene3D" id="2.40.50.140">
    <property type="entry name" value="Nucleic acid-binding proteins"/>
    <property type="match status" value="1"/>
</dbReference>
<dbReference type="HAMAP" id="MF_01345_B">
    <property type="entry name" value="Ribosomal_uS17_B"/>
    <property type="match status" value="1"/>
</dbReference>
<dbReference type="InterPro" id="IPR012340">
    <property type="entry name" value="NA-bd_OB-fold"/>
</dbReference>
<dbReference type="InterPro" id="IPR000266">
    <property type="entry name" value="Ribosomal_uS17"/>
</dbReference>
<dbReference type="InterPro" id="IPR019984">
    <property type="entry name" value="Ribosomal_uS17_bact/chlr"/>
</dbReference>
<dbReference type="InterPro" id="IPR019979">
    <property type="entry name" value="Ribosomal_uS17_CS"/>
</dbReference>
<dbReference type="NCBIfam" id="NF004123">
    <property type="entry name" value="PRK05610.1"/>
    <property type="match status" value="1"/>
</dbReference>
<dbReference type="NCBIfam" id="TIGR03635">
    <property type="entry name" value="uS17_bact"/>
    <property type="match status" value="1"/>
</dbReference>
<dbReference type="PANTHER" id="PTHR10744">
    <property type="entry name" value="40S RIBOSOMAL PROTEIN S11 FAMILY MEMBER"/>
    <property type="match status" value="1"/>
</dbReference>
<dbReference type="PANTHER" id="PTHR10744:SF1">
    <property type="entry name" value="SMALL RIBOSOMAL SUBUNIT PROTEIN US17M"/>
    <property type="match status" value="1"/>
</dbReference>
<dbReference type="Pfam" id="PF00366">
    <property type="entry name" value="Ribosomal_S17"/>
    <property type="match status" value="1"/>
</dbReference>
<dbReference type="PRINTS" id="PR00973">
    <property type="entry name" value="RIBOSOMALS17"/>
</dbReference>
<dbReference type="SUPFAM" id="SSF50249">
    <property type="entry name" value="Nucleic acid-binding proteins"/>
    <property type="match status" value="1"/>
</dbReference>
<dbReference type="PROSITE" id="PS00056">
    <property type="entry name" value="RIBOSOMAL_S17"/>
    <property type="match status" value="1"/>
</dbReference>
<protein>
    <recommendedName>
        <fullName evidence="1">Small ribosomal subunit protein uS17</fullName>
    </recommendedName>
    <alternativeName>
        <fullName evidence="2">30S ribosomal protein S17</fullName>
    </alternativeName>
</protein>
<comment type="function">
    <text evidence="1">One of the primary rRNA binding proteins, it binds specifically to the 5'-end of 16S ribosomal RNA.</text>
</comment>
<comment type="subunit">
    <text evidence="1">Part of the 30S ribosomal subunit.</text>
</comment>
<comment type="similarity">
    <text evidence="1">Belongs to the universal ribosomal protein uS17 family.</text>
</comment>
<organism>
    <name type="scientific">Mesomycoplasma hyopneumoniae (strain 7448)</name>
    <name type="common">Mycoplasma hyopneumoniae</name>
    <dbReference type="NCBI Taxonomy" id="262722"/>
    <lineage>
        <taxon>Bacteria</taxon>
        <taxon>Bacillati</taxon>
        <taxon>Mycoplasmatota</taxon>
        <taxon>Mycoplasmoidales</taxon>
        <taxon>Metamycoplasmataceae</taxon>
        <taxon>Mesomycoplasma</taxon>
    </lineage>
</organism>
<accession>Q4A8I0</accession>
<evidence type="ECO:0000255" key="1">
    <source>
        <dbReference type="HAMAP-Rule" id="MF_01345"/>
    </source>
</evidence>
<evidence type="ECO:0000305" key="2"/>